<reference key="1">
    <citation type="journal article" date="2003" name="Proc. Natl. Acad. Sci. U.S.A.">
        <title>The complete genome sequence of Mycobacterium bovis.</title>
        <authorList>
            <person name="Garnier T."/>
            <person name="Eiglmeier K."/>
            <person name="Camus J.-C."/>
            <person name="Medina N."/>
            <person name="Mansoor H."/>
            <person name="Pryor M."/>
            <person name="Duthoy S."/>
            <person name="Grondin S."/>
            <person name="Lacroix C."/>
            <person name="Monsempe C."/>
            <person name="Simon S."/>
            <person name="Harris B."/>
            <person name="Atkin R."/>
            <person name="Doggett J."/>
            <person name="Mayes R."/>
            <person name="Keating L."/>
            <person name="Wheeler P.R."/>
            <person name="Parkhill J."/>
            <person name="Barrell B.G."/>
            <person name="Cole S.T."/>
            <person name="Gordon S.V."/>
            <person name="Hewinson R.G."/>
        </authorList>
    </citation>
    <scope>NUCLEOTIDE SEQUENCE [LARGE SCALE GENOMIC DNA]</scope>
    <source>
        <strain>ATCC BAA-935 / AF2122/97</strain>
    </source>
</reference>
<reference key="2">
    <citation type="journal article" date="2017" name="Genome Announc.">
        <title>Updated reference genome sequence and annotation of Mycobacterium bovis AF2122/97.</title>
        <authorList>
            <person name="Malone K.M."/>
            <person name="Farrell D."/>
            <person name="Stuber T.P."/>
            <person name="Schubert O.T."/>
            <person name="Aebersold R."/>
            <person name="Robbe-Austerman S."/>
            <person name="Gordon S.V."/>
        </authorList>
    </citation>
    <scope>NUCLEOTIDE SEQUENCE [LARGE SCALE GENOMIC DNA]</scope>
    <scope>GENOME REANNOTATION</scope>
    <source>
        <strain>ATCC BAA-935 / AF2122/97</strain>
    </source>
</reference>
<proteinExistence type="predicted"/>
<gene>
    <name type="ordered locus">BQ2027_MB2018</name>
</gene>
<organism>
    <name type="scientific">Mycobacterium bovis (strain ATCC BAA-935 / AF2122/97)</name>
    <dbReference type="NCBI Taxonomy" id="233413"/>
    <lineage>
        <taxon>Bacteria</taxon>
        <taxon>Bacillati</taxon>
        <taxon>Actinomycetota</taxon>
        <taxon>Actinomycetes</taxon>
        <taxon>Mycobacteriales</taxon>
        <taxon>Mycobacteriaceae</taxon>
        <taxon>Mycobacterium</taxon>
        <taxon>Mycobacterium tuberculosis complex</taxon>
    </lineage>
</organism>
<accession>P64916</accession>
<accession>A0A1R3Y0P2</accession>
<accession>Q10863</accession>
<accession>X2BJU3</accession>
<keyword id="KW-1185">Reference proteome</keyword>
<evidence type="ECO:0000256" key="1">
    <source>
        <dbReference type="SAM" id="MobiDB-lite"/>
    </source>
</evidence>
<feature type="chain" id="PRO_0000103923" description="Uncharacterized protein Mb2018">
    <location>
        <begin position="1"/>
        <end position="255"/>
    </location>
</feature>
<feature type="region of interest" description="Disordered" evidence="1">
    <location>
        <begin position="42"/>
        <end position="67"/>
    </location>
</feature>
<name>Y2018_MYCBO</name>
<dbReference type="EMBL" id="LT708304">
    <property type="protein sequence ID" value="SIU00625.1"/>
    <property type="molecule type" value="Genomic_DNA"/>
</dbReference>
<dbReference type="RefSeq" id="NP_855668.1">
    <property type="nucleotide sequence ID" value="NC_002945.3"/>
</dbReference>
<dbReference type="RefSeq" id="WP_003410019.1">
    <property type="nucleotide sequence ID" value="NC_002945.4"/>
</dbReference>
<dbReference type="SMR" id="P64916"/>
<dbReference type="KEGG" id="mbo:BQ2027_MB2018"/>
<dbReference type="PATRIC" id="fig|233413.5.peg.2217"/>
<dbReference type="Proteomes" id="UP000001419">
    <property type="component" value="Chromosome"/>
</dbReference>
<dbReference type="GO" id="GO:0005886">
    <property type="term" value="C:plasma membrane"/>
    <property type="evidence" value="ECO:0007669"/>
    <property type="project" value="TreeGrafter"/>
</dbReference>
<dbReference type="CDD" id="cd12108">
    <property type="entry name" value="Hr-like"/>
    <property type="match status" value="1"/>
</dbReference>
<dbReference type="Gene3D" id="1.20.120.520">
    <property type="entry name" value="nmb1532 protein domain like"/>
    <property type="match status" value="1"/>
</dbReference>
<dbReference type="InterPro" id="IPR012312">
    <property type="entry name" value="Hemerythrin-like"/>
</dbReference>
<dbReference type="PANTHER" id="PTHR39966">
    <property type="entry name" value="BLL2471 PROTEIN-RELATED"/>
    <property type="match status" value="1"/>
</dbReference>
<dbReference type="PANTHER" id="PTHR39966:SF1">
    <property type="entry name" value="HEMERYTHRIN-LIKE DOMAIN-CONTAINING PROTEIN"/>
    <property type="match status" value="1"/>
</dbReference>
<dbReference type="Pfam" id="PF01814">
    <property type="entry name" value="Hemerythrin"/>
    <property type="match status" value="2"/>
</dbReference>
<protein>
    <recommendedName>
        <fullName>Uncharacterized protein Mb2018</fullName>
    </recommendedName>
</protein>
<sequence>MVASGAATKGVTVMKQTPPAAVGRRHLLEISASAAGVIALSACSGSPPEPGKGRPDTTPEQEVPVTAPEDLMREHGVLKRILLIYREGIRRLQADDQSPAPALNESAQIIRRFIEDYHGQLEEQYVFPKLEQAGKLTDITSVLRTQHQRGRVLTDRVLAATTAAAAFDQPARDTLAQDMAAYIRMFEPHEAREDTVVFPALRDVMSAVEFRDMAETFEDEEHRRFGEAGFQSVVDKVADIEKSLGIYDLSQFTPS</sequence>